<proteinExistence type="inferred from homology"/>
<accession>Q83GA1</accession>
<comment type="function">
    <text evidence="1">Allows the formation of correctly charged Gln-tRNA(Gln) through the transamidation of misacylated Glu-tRNA(Gln) in organisms which lack glutaminyl-tRNA synthetase. The reaction takes place in the presence of glutamine and ATP through an activated gamma-phospho-Glu-tRNA(Gln).</text>
</comment>
<comment type="catalytic activity">
    <reaction evidence="1">
        <text>L-glutamyl-tRNA(Gln) + L-glutamine + ATP + H2O = L-glutaminyl-tRNA(Gln) + L-glutamate + ADP + phosphate + H(+)</text>
        <dbReference type="Rhea" id="RHEA:17521"/>
        <dbReference type="Rhea" id="RHEA-COMP:9681"/>
        <dbReference type="Rhea" id="RHEA-COMP:9684"/>
        <dbReference type="ChEBI" id="CHEBI:15377"/>
        <dbReference type="ChEBI" id="CHEBI:15378"/>
        <dbReference type="ChEBI" id="CHEBI:29985"/>
        <dbReference type="ChEBI" id="CHEBI:30616"/>
        <dbReference type="ChEBI" id="CHEBI:43474"/>
        <dbReference type="ChEBI" id="CHEBI:58359"/>
        <dbReference type="ChEBI" id="CHEBI:78520"/>
        <dbReference type="ChEBI" id="CHEBI:78521"/>
        <dbReference type="ChEBI" id="CHEBI:456216"/>
        <dbReference type="EC" id="6.3.5.7"/>
    </reaction>
</comment>
<comment type="subunit">
    <text evidence="1">Heterotrimer of A, B and C subunits.</text>
</comment>
<comment type="similarity">
    <text evidence="1">Belongs to the amidase family. GatA subfamily.</text>
</comment>
<protein>
    <recommendedName>
        <fullName evidence="1">Glutamyl-tRNA(Gln) amidotransferase subunit A</fullName>
        <shortName evidence="1">Glu-ADT subunit A</shortName>
        <ecNumber evidence="1">6.3.5.7</ecNumber>
    </recommendedName>
</protein>
<organism>
    <name type="scientific">Tropheryma whipplei (strain Twist)</name>
    <name type="common">Whipple's bacillus</name>
    <dbReference type="NCBI Taxonomy" id="203267"/>
    <lineage>
        <taxon>Bacteria</taxon>
        <taxon>Bacillati</taxon>
        <taxon>Actinomycetota</taxon>
        <taxon>Actinomycetes</taxon>
        <taxon>Micrococcales</taxon>
        <taxon>Tropherymataceae</taxon>
        <taxon>Tropheryma</taxon>
    </lineage>
</organism>
<reference key="1">
    <citation type="journal article" date="2003" name="Genome Res.">
        <title>Tropheryma whipplei twist: a human pathogenic Actinobacteria with a reduced genome.</title>
        <authorList>
            <person name="Raoult D."/>
            <person name="Ogata H."/>
            <person name="Audic S."/>
            <person name="Robert C."/>
            <person name="Suhre K."/>
            <person name="Drancourt M."/>
            <person name="Claverie J.-M."/>
        </authorList>
    </citation>
    <scope>NUCLEOTIDE SEQUENCE [LARGE SCALE GENOMIC DNA]</scope>
    <source>
        <strain>Twist</strain>
    </source>
</reference>
<name>GATA_TROWT</name>
<evidence type="ECO:0000255" key="1">
    <source>
        <dbReference type="HAMAP-Rule" id="MF_00120"/>
    </source>
</evidence>
<gene>
    <name evidence="1" type="primary">gatA</name>
    <name type="ordered locus">TWT_412</name>
</gene>
<dbReference type="EC" id="6.3.5.7" evidence="1"/>
<dbReference type="EMBL" id="AE014184">
    <property type="protein sequence ID" value="AAO44509.1"/>
    <property type="molecule type" value="Genomic_DNA"/>
</dbReference>
<dbReference type="RefSeq" id="WP_011102561.1">
    <property type="nucleotide sequence ID" value="NC_004572.3"/>
</dbReference>
<dbReference type="SMR" id="Q83GA1"/>
<dbReference type="STRING" id="203267.TWT_412"/>
<dbReference type="KEGG" id="twh:TWT_412"/>
<dbReference type="eggNOG" id="COG0154">
    <property type="taxonomic scope" value="Bacteria"/>
</dbReference>
<dbReference type="HOGENOM" id="CLU_009600_0_3_11"/>
<dbReference type="OrthoDB" id="9811471at2"/>
<dbReference type="Proteomes" id="UP000002200">
    <property type="component" value="Chromosome"/>
</dbReference>
<dbReference type="GO" id="GO:0030956">
    <property type="term" value="C:glutamyl-tRNA(Gln) amidotransferase complex"/>
    <property type="evidence" value="ECO:0007669"/>
    <property type="project" value="InterPro"/>
</dbReference>
<dbReference type="GO" id="GO:0005524">
    <property type="term" value="F:ATP binding"/>
    <property type="evidence" value="ECO:0007669"/>
    <property type="project" value="UniProtKB-KW"/>
</dbReference>
<dbReference type="GO" id="GO:0050567">
    <property type="term" value="F:glutaminyl-tRNA synthase (glutamine-hydrolyzing) activity"/>
    <property type="evidence" value="ECO:0007669"/>
    <property type="project" value="UniProtKB-UniRule"/>
</dbReference>
<dbReference type="GO" id="GO:0006412">
    <property type="term" value="P:translation"/>
    <property type="evidence" value="ECO:0007669"/>
    <property type="project" value="UniProtKB-UniRule"/>
</dbReference>
<dbReference type="Gene3D" id="3.90.1300.10">
    <property type="entry name" value="Amidase signature (AS) domain"/>
    <property type="match status" value="1"/>
</dbReference>
<dbReference type="HAMAP" id="MF_00120">
    <property type="entry name" value="GatA"/>
    <property type="match status" value="1"/>
</dbReference>
<dbReference type="InterPro" id="IPR000120">
    <property type="entry name" value="Amidase"/>
</dbReference>
<dbReference type="InterPro" id="IPR020556">
    <property type="entry name" value="Amidase_CS"/>
</dbReference>
<dbReference type="InterPro" id="IPR023631">
    <property type="entry name" value="Amidase_dom"/>
</dbReference>
<dbReference type="InterPro" id="IPR036928">
    <property type="entry name" value="AS_sf"/>
</dbReference>
<dbReference type="InterPro" id="IPR004412">
    <property type="entry name" value="GatA"/>
</dbReference>
<dbReference type="NCBIfam" id="TIGR00132">
    <property type="entry name" value="gatA"/>
    <property type="match status" value="1"/>
</dbReference>
<dbReference type="PANTHER" id="PTHR11895:SF151">
    <property type="entry name" value="GLUTAMYL-TRNA(GLN) AMIDOTRANSFERASE SUBUNIT A"/>
    <property type="match status" value="1"/>
</dbReference>
<dbReference type="PANTHER" id="PTHR11895">
    <property type="entry name" value="TRANSAMIDASE"/>
    <property type="match status" value="1"/>
</dbReference>
<dbReference type="Pfam" id="PF01425">
    <property type="entry name" value="Amidase"/>
    <property type="match status" value="1"/>
</dbReference>
<dbReference type="SUPFAM" id="SSF75304">
    <property type="entry name" value="Amidase signature (AS) enzymes"/>
    <property type="match status" value="1"/>
</dbReference>
<dbReference type="PROSITE" id="PS00571">
    <property type="entry name" value="AMIDASES"/>
    <property type="match status" value="1"/>
</dbReference>
<keyword id="KW-0067">ATP-binding</keyword>
<keyword id="KW-0436">Ligase</keyword>
<keyword id="KW-0547">Nucleotide-binding</keyword>
<keyword id="KW-0648">Protein biosynthesis</keyword>
<keyword id="KW-1185">Reference proteome</keyword>
<sequence length="524" mass="56455">MIRRAPFLILLRFCRMGKMACSGYPPFQGRIVLSEMPAHRLAALIRSKEVSALEVAESFIDNIEASDSRICAFLYTDFSYTRDVARRVDEELKSATKLSPLAGVPIAVKDMILTRDMPTTAGSKILEGWIPPYNATVIERISRARMPILGKTNQDEFGMGSSTEYSAYKTTRNPWDLSRTAGGSGGGSSAAVSASQAPLALGTDTGGSIRLPAHCTGTVGIRPTYGSVSRYGVIALASSFDQVGPCSSNILDAALLHEVIAGYDPADAVSIKDQDLNFSQAAYEGANRGISGVRLGFVNPSNWCNSKITDLFGRTLKSLESEGAVLHEVQFPNFDHAVQAYYLIMQAEASSNLSRYDSIRFGPQEMAASASGTVSKTRSIRFGPEVKRRILLGTHILSAGYYDDFYMSAQKIRLLVKRDFAKIFSLVDVLLLPTAPTPAFKLGEKIDHHTSMYKSDTATTPASLAGLPAGSIPMGVIDGLPVGLQIIAPGQFDSRVYSTGAAIEQIIGDIHAMKNTKHNTGQTA</sequence>
<feature type="chain" id="PRO_0000105226" description="Glutamyl-tRNA(Gln) amidotransferase subunit A">
    <location>
        <begin position="1"/>
        <end position="524"/>
    </location>
</feature>
<feature type="active site" description="Charge relay system" evidence="1">
    <location>
        <position position="109"/>
    </location>
</feature>
<feature type="active site" description="Charge relay system" evidence="1">
    <location>
        <position position="184"/>
    </location>
</feature>
<feature type="active site" description="Acyl-ester intermediate" evidence="1">
    <location>
        <position position="208"/>
    </location>
</feature>